<keyword id="KW-0131">Cell cycle</keyword>
<keyword id="KW-0132">Cell division</keyword>
<keyword id="KW-0498">Mitosis</keyword>
<keyword id="KW-0539">Nucleus</keyword>
<keyword id="KW-1185">Reference proteome</keyword>
<keyword id="KW-0677">Repeat</keyword>
<keyword id="KW-0802">TPR repeat</keyword>
<keyword id="KW-0833">Ubl conjugation pathway</keyword>
<dbReference type="EMBL" id="DQ922637">
    <property type="protein sequence ID" value="ABI97116.1"/>
    <property type="molecule type" value="mRNA"/>
</dbReference>
<dbReference type="EMBL" id="AB023046">
    <property type="protein sequence ID" value="BAB01271.1"/>
    <property type="status" value="ALT_SEQ"/>
    <property type="molecule type" value="Genomic_DNA"/>
</dbReference>
<dbReference type="EMBL" id="AC001645">
    <property type="protein sequence ID" value="AAB63645.1"/>
    <property type="status" value="ALT_SEQ"/>
    <property type="molecule type" value="Genomic_DNA"/>
</dbReference>
<dbReference type="EMBL" id="CP002686">
    <property type="protein sequence ID" value="ANM63407.1"/>
    <property type="molecule type" value="Genomic_DNA"/>
</dbReference>
<dbReference type="RefSeq" id="NP_188253.3">
    <property type="nucleotide sequence ID" value="NM_112503.5"/>
</dbReference>
<dbReference type="SMR" id="Q06AN9"/>
<dbReference type="BioGRID" id="6213">
    <property type="interactions" value="5"/>
</dbReference>
<dbReference type="FunCoup" id="Q06AN9">
    <property type="interactions" value="4282"/>
</dbReference>
<dbReference type="IntAct" id="Q06AN9">
    <property type="interactions" value="4"/>
</dbReference>
<dbReference type="STRING" id="3702.Q06AN9"/>
<dbReference type="PaxDb" id="3702-AT3G16320.1"/>
<dbReference type="EnsemblPlants" id="AT3G16320.2">
    <property type="protein sequence ID" value="AT3G16320.2"/>
    <property type="gene ID" value="AT3G16320"/>
</dbReference>
<dbReference type="GeneID" id="820879"/>
<dbReference type="Gramene" id="AT3G16320.2">
    <property type="protein sequence ID" value="AT3G16320.2"/>
    <property type="gene ID" value="AT3G16320"/>
</dbReference>
<dbReference type="KEGG" id="ath:AT3G16320"/>
<dbReference type="Araport" id="AT3G16320"/>
<dbReference type="TAIR" id="AT3G16320">
    <property type="gene designation" value="CDC27A"/>
</dbReference>
<dbReference type="eggNOG" id="KOG1126">
    <property type="taxonomic scope" value="Eukaryota"/>
</dbReference>
<dbReference type="HOGENOM" id="CLU_008850_1_1_1"/>
<dbReference type="InParanoid" id="Q06AN9"/>
<dbReference type="OMA" id="GHEHVIM"/>
<dbReference type="PhylomeDB" id="Q06AN9"/>
<dbReference type="UniPathway" id="UPA00143"/>
<dbReference type="PRO" id="PR:Q06AN9"/>
<dbReference type="Proteomes" id="UP000006548">
    <property type="component" value="Chromosome 3"/>
</dbReference>
<dbReference type="ExpressionAtlas" id="Q06AN9">
    <property type="expression patterns" value="baseline and differential"/>
</dbReference>
<dbReference type="GO" id="GO:0005680">
    <property type="term" value="C:anaphase-promoting complex"/>
    <property type="evidence" value="ECO:0000353"/>
    <property type="project" value="TAIR"/>
</dbReference>
<dbReference type="GO" id="GO:0051301">
    <property type="term" value="P:cell division"/>
    <property type="evidence" value="ECO:0007669"/>
    <property type="project" value="UniProtKB-KW"/>
</dbReference>
<dbReference type="GO" id="GO:0016567">
    <property type="term" value="P:protein ubiquitination"/>
    <property type="evidence" value="ECO:0007669"/>
    <property type="project" value="UniProtKB-UniPathway"/>
</dbReference>
<dbReference type="FunFam" id="1.25.40.10:FF:000018">
    <property type="entry name" value="Cell division cycle protein 27 homolog B"/>
    <property type="match status" value="1"/>
</dbReference>
<dbReference type="Gene3D" id="1.25.40.10">
    <property type="entry name" value="Tetratricopeptide repeat domain"/>
    <property type="match status" value="4"/>
</dbReference>
<dbReference type="InterPro" id="IPR011990">
    <property type="entry name" value="TPR-like_helical_dom_sf"/>
</dbReference>
<dbReference type="InterPro" id="IPR013105">
    <property type="entry name" value="TPR_2"/>
</dbReference>
<dbReference type="InterPro" id="IPR019734">
    <property type="entry name" value="TPR_rpt"/>
</dbReference>
<dbReference type="PANTHER" id="PTHR12558">
    <property type="entry name" value="CELL DIVISION CYCLE 16,23,27"/>
    <property type="match status" value="1"/>
</dbReference>
<dbReference type="PANTHER" id="PTHR12558:SF27">
    <property type="entry name" value="CELL DIVISION CYCLE PROTEIN 27 HOMOLOG A"/>
    <property type="match status" value="1"/>
</dbReference>
<dbReference type="Pfam" id="PF12895">
    <property type="entry name" value="ANAPC3"/>
    <property type="match status" value="1"/>
</dbReference>
<dbReference type="Pfam" id="PF00515">
    <property type="entry name" value="TPR_1"/>
    <property type="match status" value="1"/>
</dbReference>
<dbReference type="Pfam" id="PF14559">
    <property type="entry name" value="TPR_19"/>
    <property type="match status" value="1"/>
</dbReference>
<dbReference type="Pfam" id="PF07719">
    <property type="entry name" value="TPR_2"/>
    <property type="match status" value="1"/>
</dbReference>
<dbReference type="SMART" id="SM00028">
    <property type="entry name" value="TPR"/>
    <property type="match status" value="7"/>
</dbReference>
<dbReference type="SUPFAM" id="SSF48452">
    <property type="entry name" value="TPR-like"/>
    <property type="match status" value="2"/>
</dbReference>
<dbReference type="PROSITE" id="PS50005">
    <property type="entry name" value="TPR"/>
    <property type="match status" value="8"/>
</dbReference>
<dbReference type="PROSITE" id="PS50293">
    <property type="entry name" value="TPR_REGION"/>
    <property type="match status" value="2"/>
</dbReference>
<organism>
    <name type="scientific">Arabidopsis thaliana</name>
    <name type="common">Mouse-ear cress</name>
    <dbReference type="NCBI Taxonomy" id="3702"/>
    <lineage>
        <taxon>Eukaryota</taxon>
        <taxon>Viridiplantae</taxon>
        <taxon>Streptophyta</taxon>
        <taxon>Embryophyta</taxon>
        <taxon>Tracheophyta</taxon>
        <taxon>Spermatophyta</taxon>
        <taxon>Magnoliopsida</taxon>
        <taxon>eudicotyledons</taxon>
        <taxon>Gunneridae</taxon>
        <taxon>Pentapetalae</taxon>
        <taxon>rosids</taxon>
        <taxon>malvids</taxon>
        <taxon>Brassicales</taxon>
        <taxon>Brassicaceae</taxon>
        <taxon>Camelineae</taxon>
        <taxon>Arabidopsis</taxon>
    </lineage>
</organism>
<evidence type="ECO:0000256" key="1">
    <source>
        <dbReference type="SAM" id="MobiDB-lite"/>
    </source>
</evidence>
<evidence type="ECO:0000269" key="2">
    <source>
    </source>
</evidence>
<evidence type="ECO:0000269" key="3">
    <source>
    </source>
</evidence>
<evidence type="ECO:0000305" key="4"/>
<sequence>MMENLLANCVQKNLNHFMFTNAIFLCELLLAQFPSEVNLQLLARCYLSNSQAYSAYYILKGSKTPQSRYLFAFSCFKLDLLGEAEAALLPCEDYAEEVPGGAAGHYLLGLIYRYSGRKNCSIQQFRMALSFDPLCWEAYGELCSLGAAEEASTVFGNVASQRLQKTCVEQRISFSEGATIDQITDSDKALKDTGLSQTEHIPGENQQDLKIMQQPGDIPPNTDRQLSTNGWDLNTPSPVLLQVMDALPPLLLKNMRRPAVEGSLMSVHGVRVRRRNFFSEELSAEAQEESGRRRSARIAARKKNPMSQSFGKDSHWLHLSPSESNYAPSLSSMIGKCRIQSSKEATTSGQSVSDIGSSVDDEEKSNPSESSPDRFSLISGISEVLSLLKILGDGHRHLHMYKCQEALLAYQKLSQKQYNTHWVLMQVGKAYFELQDYFNADSSFTLAHQKYPYALEGMDTYSTVLYHLKEEMRLGYLAQELISVDRLSPESWCAVGNCYSLRKDHDTALKMFQRAIQLNERFTYAHTLCGHEFAALEEFEDAERCYRKALGIDTRHYNAWYGLGMTYLRQEKFEFAQHQFQLALQINPRSSVIMCYYGIALHESKRNDEALMMMEKAVLTDAKNPLPKYYKAHILTSLGDYHKAQKVLEELKECAPQESSVHASLGKIYNQLKQYDKAVLHFGIALDLSPSPSDAVKIKAYMERLILPDELVTEENL</sequence>
<accession>Q06AN9</accession>
<accession>O04325</accession>
<accession>Q9LU16</accession>
<feature type="chain" id="PRO_0000396839" description="Cell division cycle protein 27 homolog A">
    <location>
        <begin position="1"/>
        <end position="717"/>
    </location>
</feature>
<feature type="repeat" description="TPR 1">
    <location>
        <begin position="421"/>
        <end position="454"/>
    </location>
</feature>
<feature type="repeat" description="TPR 2">
    <location>
        <begin position="489"/>
        <end position="522"/>
    </location>
</feature>
<feature type="repeat" description="TPR 3">
    <location>
        <begin position="524"/>
        <end position="556"/>
    </location>
</feature>
<feature type="repeat" description="TPR 4">
    <location>
        <begin position="557"/>
        <end position="590"/>
    </location>
</feature>
<feature type="repeat" description="TPR 5">
    <location>
        <begin position="592"/>
        <end position="624"/>
    </location>
</feature>
<feature type="repeat" description="TPR 6">
    <location>
        <begin position="625"/>
        <end position="658"/>
    </location>
</feature>
<feature type="repeat" description="TPR 7">
    <location>
        <begin position="659"/>
        <end position="692"/>
    </location>
</feature>
<feature type="region of interest" description="Disordered" evidence="1">
    <location>
        <begin position="198"/>
        <end position="217"/>
    </location>
</feature>
<feature type="region of interest" description="Disordered" evidence="1">
    <location>
        <begin position="282"/>
        <end position="315"/>
    </location>
</feature>
<feature type="region of interest" description="Disordered" evidence="1">
    <location>
        <begin position="342"/>
        <end position="374"/>
    </location>
</feature>
<feature type="compositionally biased region" description="Polar residues" evidence="1">
    <location>
        <begin position="198"/>
        <end position="208"/>
    </location>
</feature>
<feature type="compositionally biased region" description="Basic residues" evidence="1">
    <location>
        <begin position="293"/>
        <end position="304"/>
    </location>
</feature>
<feature type="compositionally biased region" description="Polar residues" evidence="1">
    <location>
        <begin position="342"/>
        <end position="356"/>
    </location>
</feature>
<feature type="sequence conflict" description="In Ref. 1; ABI97116." evidence="4" ref="1">
    <location>
        <position position="164"/>
    </location>
</feature>
<feature type="sequence conflict" description="In Ref. 1; ABI97116." evidence="4" ref="1">
    <original>L</original>
    <variation>P</variation>
    <location>
        <position position="247"/>
    </location>
</feature>
<feature type="sequence conflict" description="In Ref. 1; ABI97116." evidence="4" ref="1">
    <original>I</original>
    <variation>T</variation>
    <location>
        <position position="355"/>
    </location>
</feature>
<feature type="sequence conflict" description="In Ref. 1; ABI97116." evidence="4" ref="1">
    <original>L</original>
    <variation>I</variation>
    <location>
        <position position="387"/>
    </location>
</feature>
<protein>
    <recommendedName>
        <fullName>Cell division cycle protein 27 homolog A</fullName>
        <shortName>CDC27 homolog A</shortName>
    </recommendedName>
    <alternativeName>
        <fullName>Anaphase-promoting complex subunit 3</fullName>
    </alternativeName>
</protein>
<reference key="1">
    <citation type="journal article" date="2006" name="Cell Cycle">
        <title>The Arabidopsis anaphase promoting complex (APC): regulation through subunit availability in plant tissues.</title>
        <authorList>
            <person name="Eloy N.B."/>
            <person name="Coppens F."/>
            <person name="Beemster G.T."/>
            <person name="Hemerly A.S."/>
            <person name="Ferreira P.C."/>
        </authorList>
    </citation>
    <scope>NUCLEOTIDE SEQUENCE [MRNA]</scope>
</reference>
<reference key="2">
    <citation type="journal article" date="2000" name="DNA Res.">
        <title>Structural analysis of Arabidopsis thaliana chromosome 3. I. Sequence features of the regions of 4,504,864 bp covered by sixty P1 and TAC clones.</title>
        <authorList>
            <person name="Sato S."/>
            <person name="Nakamura Y."/>
            <person name="Kaneko T."/>
            <person name="Katoh T."/>
            <person name="Asamizu E."/>
            <person name="Tabata S."/>
        </authorList>
    </citation>
    <scope>NUCLEOTIDE SEQUENCE [LARGE SCALE GENOMIC DNA]</scope>
    <source>
        <strain>cv. Columbia</strain>
    </source>
</reference>
<reference key="3">
    <citation type="journal article" date="2000" name="Nature">
        <title>Sequence and analysis of chromosome 3 of the plant Arabidopsis thaliana.</title>
        <authorList>
            <person name="Salanoubat M."/>
            <person name="Lemcke K."/>
            <person name="Rieger M."/>
            <person name="Ansorge W."/>
            <person name="Unseld M."/>
            <person name="Fartmann B."/>
            <person name="Valle G."/>
            <person name="Bloecker H."/>
            <person name="Perez-Alonso M."/>
            <person name="Obermaier B."/>
            <person name="Delseny M."/>
            <person name="Boutry M."/>
            <person name="Grivell L.A."/>
            <person name="Mache R."/>
            <person name="Puigdomenech P."/>
            <person name="De Simone V."/>
            <person name="Choisne N."/>
            <person name="Artiguenave F."/>
            <person name="Robert C."/>
            <person name="Brottier P."/>
            <person name="Wincker P."/>
            <person name="Cattolico L."/>
            <person name="Weissenbach J."/>
            <person name="Saurin W."/>
            <person name="Quetier F."/>
            <person name="Schaefer M."/>
            <person name="Mueller-Auer S."/>
            <person name="Gabel C."/>
            <person name="Fuchs M."/>
            <person name="Benes V."/>
            <person name="Wurmbach E."/>
            <person name="Drzonek H."/>
            <person name="Erfle H."/>
            <person name="Jordan N."/>
            <person name="Bangert S."/>
            <person name="Wiedelmann R."/>
            <person name="Kranz H."/>
            <person name="Voss H."/>
            <person name="Holland R."/>
            <person name="Brandt P."/>
            <person name="Nyakatura G."/>
            <person name="Vezzi A."/>
            <person name="D'Angelo M."/>
            <person name="Pallavicini A."/>
            <person name="Toppo S."/>
            <person name="Simionati B."/>
            <person name="Conrad A."/>
            <person name="Hornischer K."/>
            <person name="Kauer G."/>
            <person name="Loehnert T.-H."/>
            <person name="Nordsiek G."/>
            <person name="Reichelt J."/>
            <person name="Scharfe M."/>
            <person name="Schoen O."/>
            <person name="Bargues M."/>
            <person name="Terol J."/>
            <person name="Climent J."/>
            <person name="Navarro P."/>
            <person name="Collado C."/>
            <person name="Perez-Perez A."/>
            <person name="Ottenwaelder B."/>
            <person name="Duchemin D."/>
            <person name="Cooke R."/>
            <person name="Laudie M."/>
            <person name="Berger-Llauro C."/>
            <person name="Purnelle B."/>
            <person name="Masuy D."/>
            <person name="de Haan M."/>
            <person name="Maarse A.C."/>
            <person name="Alcaraz J.-P."/>
            <person name="Cottet A."/>
            <person name="Casacuberta E."/>
            <person name="Monfort A."/>
            <person name="Argiriou A."/>
            <person name="Flores M."/>
            <person name="Liguori R."/>
            <person name="Vitale D."/>
            <person name="Mannhaupt G."/>
            <person name="Haase D."/>
            <person name="Schoof H."/>
            <person name="Rudd S."/>
            <person name="Zaccaria P."/>
            <person name="Mewes H.-W."/>
            <person name="Mayer K.F.X."/>
            <person name="Kaul S."/>
            <person name="Town C.D."/>
            <person name="Koo H.L."/>
            <person name="Tallon L.J."/>
            <person name="Jenkins J."/>
            <person name="Rooney T."/>
            <person name="Rizzo M."/>
            <person name="Walts A."/>
            <person name="Utterback T."/>
            <person name="Fujii C.Y."/>
            <person name="Shea T.P."/>
            <person name="Creasy T.H."/>
            <person name="Haas B."/>
            <person name="Maiti R."/>
            <person name="Wu D."/>
            <person name="Peterson J."/>
            <person name="Van Aken S."/>
            <person name="Pai G."/>
            <person name="Militscher J."/>
            <person name="Sellers P."/>
            <person name="Gill J.E."/>
            <person name="Feldblyum T.V."/>
            <person name="Preuss D."/>
            <person name="Lin X."/>
            <person name="Nierman W.C."/>
            <person name="Salzberg S.L."/>
            <person name="White O."/>
            <person name="Venter J.C."/>
            <person name="Fraser C.M."/>
            <person name="Kaneko T."/>
            <person name="Nakamura Y."/>
            <person name="Sato S."/>
            <person name="Kato T."/>
            <person name="Asamizu E."/>
            <person name="Sasamoto S."/>
            <person name="Kimura T."/>
            <person name="Idesawa K."/>
            <person name="Kawashima K."/>
            <person name="Kishida Y."/>
            <person name="Kiyokawa C."/>
            <person name="Kohara M."/>
            <person name="Matsumoto M."/>
            <person name="Matsuno A."/>
            <person name="Muraki A."/>
            <person name="Nakayama S."/>
            <person name="Nakazaki N."/>
            <person name="Shinpo S."/>
            <person name="Takeuchi C."/>
            <person name="Wada T."/>
            <person name="Watanabe A."/>
            <person name="Yamada M."/>
            <person name="Yasuda M."/>
            <person name="Tabata S."/>
        </authorList>
    </citation>
    <scope>NUCLEOTIDE SEQUENCE [LARGE SCALE GENOMIC DNA]</scope>
    <source>
        <strain>cv. Columbia</strain>
    </source>
</reference>
<reference key="4">
    <citation type="journal article" date="2017" name="Plant J.">
        <title>Araport11: a complete reannotation of the Arabidopsis thaliana reference genome.</title>
        <authorList>
            <person name="Cheng C.Y."/>
            <person name="Krishnakumar V."/>
            <person name="Chan A.P."/>
            <person name="Thibaud-Nissen F."/>
            <person name="Schobel S."/>
            <person name="Town C.D."/>
        </authorList>
    </citation>
    <scope>GENOME REANNOTATION</scope>
    <source>
        <strain>cv. Columbia</strain>
    </source>
</reference>
<reference key="5">
    <citation type="journal article" date="2008" name="Plant J.">
        <title>Specialization of CDC27 function in the Arabidopsis thaliana anaphase-promoting complex (APC/C).</title>
        <authorList>
            <person name="Perez-Perez J.M."/>
            <person name="Serralbo O."/>
            <person name="Vanstraelen M."/>
            <person name="Gonzalez C."/>
            <person name="Criqui M.C."/>
            <person name="Genschik P."/>
            <person name="Kondorosi E."/>
            <person name="Scheres B."/>
        </authorList>
    </citation>
    <scope>FUNCTION</scope>
    <scope>DISRUPTION PHENOTYPE</scope>
    <scope>INTERACTION WITH APC2 AND APC10</scope>
</reference>
<reference key="6">
    <citation type="journal article" date="2009" name="Plant Mol. Biol.">
        <title>Overexpression of the Arabidopsis anaphase promoting complex subunit CDC27a increases growth rate and organ size.</title>
        <authorList>
            <person name="Rojas C.A."/>
            <person name="Eloy N.B."/>
            <person name="Lima Mde F."/>
            <person name="Rodrigues R.L."/>
            <person name="Franco L.O."/>
            <person name="Himanen K."/>
            <person name="Beemster G.T."/>
            <person name="Hemerly A.S."/>
            <person name="Ferreira P.C."/>
        </authorList>
    </citation>
    <scope>FUNCTION</scope>
</reference>
<proteinExistence type="evidence at protein level"/>
<name>CD27A_ARATH</name>
<comment type="function">
    <text evidence="2 3">Component of the anaphase promoting complex/cyclosome (APC/C), a cell cycle-regulated E3 ubiquitin-protein ligase complex that controls progression through mitosis and the G1 phase of the cell cycle. The APC/C complex controls several key steps in the cell cycle by mediating ubiquitination and subsequent degradation of target proteins such as cyclins. The APC/C complex is required for the female gametophyte development and is involved in several aspect of development by controlling cell division and cell elongation. Involved in the control of endoreduplication. Functionally redundant with CDC27B in the control of gametophyte development.</text>
</comment>
<comment type="pathway">
    <text>Protein modification; protein ubiquitination.</text>
</comment>
<comment type="subunit">
    <text evidence="2">The APC/C is composed of at least 10 subunits. Interacts with APC2 and APC10.</text>
</comment>
<comment type="interaction">
    <interactant intactId="EBI-1749373">
        <id>Q06AN9</id>
    </interactant>
    <interactant intactId="EBI-1749354">
        <id>Q9ZPW2</id>
        <label>APC10</label>
    </interactant>
    <organismsDiffer>false</organismsDiffer>
    <experiments>3</experiments>
</comment>
<comment type="interaction">
    <interactant intactId="EBI-1749373">
        <id>Q06AN9</id>
    </interactant>
    <interactant intactId="EBI-1749410">
        <id>Q8H1U5</id>
        <label>APC2</label>
    </interactant>
    <organismsDiffer>false</organismsDiffer>
    <experiments>2</experiments>
</comment>
<comment type="subcellular location">
    <subcellularLocation>
        <location>Nucleus</location>
    </subcellularLocation>
</comment>
<comment type="disruption phenotype">
    <text evidence="2">No visible phenotype. Cdc27a and cdc27b double mutant is gametophytic lethal (PubMed:17944809).</text>
</comment>
<comment type="similarity">
    <text evidence="4">Belongs to the APC3/CDC27 family.</text>
</comment>
<comment type="sequence caution" evidence="4">
    <conflict type="erroneous gene model prediction">
        <sequence resource="EMBL-CDS" id="AAB63645"/>
    </conflict>
</comment>
<comment type="sequence caution" evidence="4">
    <conflict type="erroneous gene model prediction">
        <sequence resource="EMBL-CDS" id="BAB01271"/>
    </conflict>
</comment>
<gene>
    <name type="primary">CDC27A</name>
    <name type="synonym">APC3</name>
    <name type="ordered locus">At3g16320</name>
    <name type="ORF">T02O04.19</name>
</gene>